<name>Y1509_FERNB</name>
<keyword id="KW-1185">Reference proteome</keyword>
<dbReference type="EMBL" id="CP000771">
    <property type="protein sequence ID" value="ABS61352.1"/>
    <property type="molecule type" value="Genomic_DNA"/>
</dbReference>
<dbReference type="SMR" id="A7HN69"/>
<dbReference type="STRING" id="381764.Fnod_1509"/>
<dbReference type="KEGG" id="fno:Fnod_1509"/>
<dbReference type="eggNOG" id="COG0792">
    <property type="taxonomic scope" value="Bacteria"/>
</dbReference>
<dbReference type="HOGENOM" id="CLU_115353_3_1_0"/>
<dbReference type="OrthoDB" id="9802516at2"/>
<dbReference type="Proteomes" id="UP000002415">
    <property type="component" value="Chromosome"/>
</dbReference>
<dbReference type="GO" id="GO:0003676">
    <property type="term" value="F:nucleic acid binding"/>
    <property type="evidence" value="ECO:0007669"/>
    <property type="project" value="InterPro"/>
</dbReference>
<dbReference type="Gene3D" id="3.40.1350.10">
    <property type="match status" value="1"/>
</dbReference>
<dbReference type="HAMAP" id="MF_00048">
    <property type="entry name" value="UPF0102"/>
    <property type="match status" value="1"/>
</dbReference>
<dbReference type="InterPro" id="IPR011335">
    <property type="entry name" value="Restrct_endonuc-II-like"/>
</dbReference>
<dbReference type="InterPro" id="IPR011856">
    <property type="entry name" value="tRNA_endonuc-like_dom_sf"/>
</dbReference>
<dbReference type="InterPro" id="IPR003509">
    <property type="entry name" value="UPF0102_YraN-like"/>
</dbReference>
<dbReference type="PANTHER" id="PTHR34039">
    <property type="entry name" value="UPF0102 PROTEIN YRAN"/>
    <property type="match status" value="1"/>
</dbReference>
<dbReference type="PANTHER" id="PTHR34039:SF1">
    <property type="entry name" value="UPF0102 PROTEIN YRAN"/>
    <property type="match status" value="1"/>
</dbReference>
<dbReference type="Pfam" id="PF02021">
    <property type="entry name" value="UPF0102"/>
    <property type="match status" value="1"/>
</dbReference>
<dbReference type="SUPFAM" id="SSF52980">
    <property type="entry name" value="Restriction endonuclease-like"/>
    <property type="match status" value="1"/>
</dbReference>
<sequence>MVNMFKHIKKSSNNSESWNKKEWQIAEELAVKYLKEKGYKILEKNFKTPYGEIDIIANKKDIIIFVEVKSGKGIRIQPSERVDDKKYLKIVKSAEFYLEFYLKNKNYKISQIDVIEIINGNIKHYENVGWDFT</sequence>
<proteinExistence type="inferred from homology"/>
<gene>
    <name type="ordered locus">Fnod_1509</name>
</gene>
<reference key="1">
    <citation type="submission" date="2007-07" db="EMBL/GenBank/DDBJ databases">
        <title>Complete sequence of Fervidobacterium nodosum Rt17-B1.</title>
        <authorList>
            <consortium name="US DOE Joint Genome Institute"/>
            <person name="Copeland A."/>
            <person name="Lucas S."/>
            <person name="Lapidus A."/>
            <person name="Barry K."/>
            <person name="Glavina del Rio T."/>
            <person name="Dalin E."/>
            <person name="Tice H."/>
            <person name="Pitluck S."/>
            <person name="Saunders E."/>
            <person name="Brettin T."/>
            <person name="Bruce D."/>
            <person name="Detter J.C."/>
            <person name="Han C."/>
            <person name="Schmutz J."/>
            <person name="Larimer F."/>
            <person name="Land M."/>
            <person name="Hauser L."/>
            <person name="Kyrpides N."/>
            <person name="Mikhailova N."/>
            <person name="Nelson K."/>
            <person name="Gogarten J.P."/>
            <person name="Noll K."/>
            <person name="Richardson P."/>
        </authorList>
    </citation>
    <scope>NUCLEOTIDE SEQUENCE [LARGE SCALE GENOMIC DNA]</scope>
    <source>
        <strain>ATCC 35602 / DSM 5306 / Rt17-B1</strain>
    </source>
</reference>
<accession>A7HN69</accession>
<feature type="chain" id="PRO_0000336175" description="UPF0102 protein Fnod_1509">
    <location>
        <begin position="1"/>
        <end position="133"/>
    </location>
</feature>
<protein>
    <recommendedName>
        <fullName evidence="1">UPF0102 protein Fnod_1509</fullName>
    </recommendedName>
</protein>
<organism>
    <name type="scientific">Fervidobacterium nodosum (strain ATCC 35602 / DSM 5306 / Rt17-B1)</name>
    <dbReference type="NCBI Taxonomy" id="381764"/>
    <lineage>
        <taxon>Bacteria</taxon>
        <taxon>Thermotogati</taxon>
        <taxon>Thermotogota</taxon>
        <taxon>Thermotogae</taxon>
        <taxon>Thermotogales</taxon>
        <taxon>Fervidobacteriaceae</taxon>
        <taxon>Fervidobacterium</taxon>
    </lineage>
</organism>
<evidence type="ECO:0000255" key="1">
    <source>
        <dbReference type="HAMAP-Rule" id="MF_00048"/>
    </source>
</evidence>
<comment type="similarity">
    <text evidence="1">Belongs to the UPF0102 family.</text>
</comment>